<proteinExistence type="inferred from homology"/>
<organism>
    <name type="scientific">Escherichia coli O139:H28 (strain E24377A / ETEC)</name>
    <dbReference type="NCBI Taxonomy" id="331111"/>
    <lineage>
        <taxon>Bacteria</taxon>
        <taxon>Pseudomonadati</taxon>
        <taxon>Pseudomonadota</taxon>
        <taxon>Gammaproteobacteria</taxon>
        <taxon>Enterobacterales</taxon>
        <taxon>Enterobacteriaceae</taxon>
        <taxon>Escherichia</taxon>
    </lineage>
</organism>
<comment type="function">
    <text evidence="1">Chaperone involved in the maturation of iron-sulfur cluster-containing proteins. Has a low intrinsic ATPase activity which is markedly stimulated by HscB. Involved in the maturation of IscU.</text>
</comment>
<comment type="similarity">
    <text evidence="1">Belongs to the heat shock protein 70 family.</text>
</comment>
<protein>
    <recommendedName>
        <fullName evidence="1">Chaperone protein HscA</fullName>
    </recommendedName>
    <alternativeName>
        <fullName evidence="1">Hsc66</fullName>
    </alternativeName>
</protein>
<accession>A7ZPW9</accession>
<reference key="1">
    <citation type="journal article" date="2008" name="J. Bacteriol.">
        <title>The pangenome structure of Escherichia coli: comparative genomic analysis of E. coli commensal and pathogenic isolates.</title>
        <authorList>
            <person name="Rasko D.A."/>
            <person name="Rosovitz M.J."/>
            <person name="Myers G.S.A."/>
            <person name="Mongodin E.F."/>
            <person name="Fricke W.F."/>
            <person name="Gajer P."/>
            <person name="Crabtree J."/>
            <person name="Sebaihia M."/>
            <person name="Thomson N.R."/>
            <person name="Chaudhuri R."/>
            <person name="Henderson I.R."/>
            <person name="Sperandio V."/>
            <person name="Ravel J."/>
        </authorList>
    </citation>
    <scope>NUCLEOTIDE SEQUENCE [LARGE SCALE GENOMIC DNA]</scope>
    <source>
        <strain>E24377A / ETEC</strain>
    </source>
</reference>
<feature type="chain" id="PRO_1000061965" description="Chaperone protein HscA">
    <location>
        <begin position="1"/>
        <end position="616"/>
    </location>
</feature>
<gene>
    <name evidence="1" type="primary">hscA</name>
    <name type="ordered locus">EcE24377A_2810</name>
</gene>
<sequence>MALLQISEPGLSAAPHQRRLAAGIDLGTTNSLVATVRSGQAETLADHEGRHLLPSVVHYQQQGHSVGYDARTNAALDTANTISSVKRLMGRSLADIQQRYPHLPYQFQASENGLPMIETAAGLLNPVRVSADILKALAARATEALAGELDGVVITVPAYFDDAQRQGTKDAARLAGLHVLRLLNEPTAAAIAYGLDSGQEGVIAVYDLGGGTFDISILRLSRGVFEVLATGGDSALGGDDFDHLLADYIREQAGIPDRSDNRVQRELLDAAIAAKIALSYADSVTVNVAGWQGEISREQFNELIAPLVKRTLLACRRALKDAGVEADEVLEVVMVGGSTRVPLVRERVGEFFGRPPLTSIDPDKVVAIGAAIQADILVGNKPDSEMLLLDVIPLSLGLETMGGLVEKVIPRNTTIPVARAQDFTTFKDGQTAMSIHVMQGERELVQDCRSLARFALRGIPALPAGGAHIRVTFQVDADGLLSVTAMEKSTGVEASIQVKPSYGLTDSEIASMIKDSMSYAEQDVKARMLAEQKVEAARVLESLHGALAADAALLSAAERQVIDDAAAHLSEVAQGDDVDAIEQAIKNVDKQTQDFAARRMDQSVRRALKGHSVDEV</sequence>
<evidence type="ECO:0000255" key="1">
    <source>
        <dbReference type="HAMAP-Rule" id="MF_00679"/>
    </source>
</evidence>
<dbReference type="EMBL" id="CP000800">
    <property type="protein sequence ID" value="ABV19329.1"/>
    <property type="molecule type" value="Genomic_DNA"/>
</dbReference>
<dbReference type="RefSeq" id="WP_001196630.1">
    <property type="nucleotide sequence ID" value="NC_009801.1"/>
</dbReference>
<dbReference type="SMR" id="A7ZPW9"/>
<dbReference type="KEGG" id="ecw:EcE24377A_2810"/>
<dbReference type="HOGENOM" id="CLU_005965_2_1_6"/>
<dbReference type="Proteomes" id="UP000001122">
    <property type="component" value="Chromosome"/>
</dbReference>
<dbReference type="GO" id="GO:0005524">
    <property type="term" value="F:ATP binding"/>
    <property type="evidence" value="ECO:0007669"/>
    <property type="project" value="UniProtKB-KW"/>
</dbReference>
<dbReference type="GO" id="GO:0016887">
    <property type="term" value="F:ATP hydrolysis activity"/>
    <property type="evidence" value="ECO:0007669"/>
    <property type="project" value="UniProtKB-UniRule"/>
</dbReference>
<dbReference type="GO" id="GO:0140662">
    <property type="term" value="F:ATP-dependent protein folding chaperone"/>
    <property type="evidence" value="ECO:0007669"/>
    <property type="project" value="InterPro"/>
</dbReference>
<dbReference type="GO" id="GO:0051082">
    <property type="term" value="F:unfolded protein binding"/>
    <property type="evidence" value="ECO:0007669"/>
    <property type="project" value="InterPro"/>
</dbReference>
<dbReference type="GO" id="GO:0016226">
    <property type="term" value="P:iron-sulfur cluster assembly"/>
    <property type="evidence" value="ECO:0007669"/>
    <property type="project" value="InterPro"/>
</dbReference>
<dbReference type="CDD" id="cd10236">
    <property type="entry name" value="ASKHA_NBD_HSP70_HscA"/>
    <property type="match status" value="1"/>
</dbReference>
<dbReference type="FunFam" id="1.20.1270.10:FF:000006">
    <property type="entry name" value="Chaperone protein HscA"/>
    <property type="match status" value="1"/>
</dbReference>
<dbReference type="FunFam" id="3.30.420.40:FF:000046">
    <property type="entry name" value="Chaperone protein HscA"/>
    <property type="match status" value="1"/>
</dbReference>
<dbReference type="FunFam" id="3.90.640.10:FF:000013">
    <property type="entry name" value="Chaperone protein HscA"/>
    <property type="match status" value="1"/>
</dbReference>
<dbReference type="FunFam" id="2.60.34.10:FF:000005">
    <property type="entry name" value="Chaperone protein HscA homolog"/>
    <property type="match status" value="1"/>
</dbReference>
<dbReference type="FunFam" id="3.30.420.40:FF:000020">
    <property type="entry name" value="Chaperone protein HscA homolog"/>
    <property type="match status" value="1"/>
</dbReference>
<dbReference type="Gene3D" id="1.20.1270.10">
    <property type="match status" value="1"/>
</dbReference>
<dbReference type="Gene3D" id="3.30.420.40">
    <property type="match status" value="2"/>
</dbReference>
<dbReference type="Gene3D" id="3.90.640.10">
    <property type="entry name" value="Actin, Chain A, domain 4"/>
    <property type="match status" value="1"/>
</dbReference>
<dbReference type="Gene3D" id="2.60.34.10">
    <property type="entry name" value="Substrate Binding Domain Of DNAk, Chain A, domain 1"/>
    <property type="match status" value="1"/>
</dbReference>
<dbReference type="HAMAP" id="MF_00679">
    <property type="entry name" value="HscA"/>
    <property type="match status" value="1"/>
</dbReference>
<dbReference type="InterPro" id="IPR043129">
    <property type="entry name" value="ATPase_NBD"/>
</dbReference>
<dbReference type="InterPro" id="IPR018181">
    <property type="entry name" value="Heat_shock_70_CS"/>
</dbReference>
<dbReference type="InterPro" id="IPR042039">
    <property type="entry name" value="HscA_NBD"/>
</dbReference>
<dbReference type="InterPro" id="IPR029048">
    <property type="entry name" value="HSP70_C_sf"/>
</dbReference>
<dbReference type="InterPro" id="IPR029047">
    <property type="entry name" value="HSP70_peptide-bd_sf"/>
</dbReference>
<dbReference type="InterPro" id="IPR013126">
    <property type="entry name" value="Hsp_70_fam"/>
</dbReference>
<dbReference type="InterPro" id="IPR010236">
    <property type="entry name" value="ISC_FeS_clus_asmbl_HscA"/>
</dbReference>
<dbReference type="NCBIfam" id="TIGR01991">
    <property type="entry name" value="HscA"/>
    <property type="match status" value="1"/>
</dbReference>
<dbReference type="NCBIfam" id="NF003520">
    <property type="entry name" value="PRK05183.1"/>
    <property type="match status" value="1"/>
</dbReference>
<dbReference type="PANTHER" id="PTHR19375">
    <property type="entry name" value="HEAT SHOCK PROTEIN 70KDA"/>
    <property type="match status" value="1"/>
</dbReference>
<dbReference type="Pfam" id="PF00012">
    <property type="entry name" value="HSP70"/>
    <property type="match status" value="1"/>
</dbReference>
<dbReference type="PRINTS" id="PR00301">
    <property type="entry name" value="HEATSHOCK70"/>
</dbReference>
<dbReference type="SUPFAM" id="SSF53067">
    <property type="entry name" value="Actin-like ATPase domain"/>
    <property type="match status" value="2"/>
</dbReference>
<dbReference type="SUPFAM" id="SSF100934">
    <property type="entry name" value="Heat shock protein 70kD (HSP70), C-terminal subdomain"/>
    <property type="match status" value="1"/>
</dbReference>
<dbReference type="SUPFAM" id="SSF100920">
    <property type="entry name" value="Heat shock protein 70kD (HSP70), peptide-binding domain"/>
    <property type="match status" value="1"/>
</dbReference>
<dbReference type="PROSITE" id="PS00297">
    <property type="entry name" value="HSP70_1"/>
    <property type="match status" value="1"/>
</dbReference>
<dbReference type="PROSITE" id="PS00329">
    <property type="entry name" value="HSP70_2"/>
    <property type="match status" value="1"/>
</dbReference>
<dbReference type="PROSITE" id="PS01036">
    <property type="entry name" value="HSP70_3"/>
    <property type="match status" value="1"/>
</dbReference>
<keyword id="KW-0067">ATP-binding</keyword>
<keyword id="KW-0143">Chaperone</keyword>
<keyword id="KW-0547">Nucleotide-binding</keyword>
<keyword id="KW-1185">Reference proteome</keyword>
<name>HSCA_ECO24</name>